<keyword id="KW-0325">Glycoprotein</keyword>
<keyword id="KW-0472">Membrane</keyword>
<keyword id="KW-0812">Transmembrane</keyword>
<keyword id="KW-0946">Virion</keyword>
<keyword id="KW-0843">Virulence</keyword>
<feature type="chain" id="PRO_0000115787" description="Glycoprotein gp2">
    <location>
        <begin position="1" status="less than"/>
        <end position="262"/>
    </location>
</feature>
<feature type="region of interest" description="Disordered" evidence="2">
    <location>
        <begin position="1"/>
        <end position="45"/>
    </location>
</feature>
<feature type="non-terminal residue">
    <location>
        <position position="1"/>
    </location>
</feature>
<dbReference type="PIR" id="A36646">
    <property type="entry name" value="A36646"/>
</dbReference>
<dbReference type="GO" id="GO:0016020">
    <property type="term" value="C:membrane"/>
    <property type="evidence" value="ECO:0007669"/>
    <property type="project" value="UniProtKB-KW"/>
</dbReference>
<dbReference type="GO" id="GO:0055036">
    <property type="term" value="C:virion membrane"/>
    <property type="evidence" value="ECO:0007669"/>
    <property type="project" value="UniProtKB-SubCell"/>
</dbReference>
<dbReference type="GO" id="GO:0016032">
    <property type="term" value="P:viral process"/>
    <property type="evidence" value="ECO:0007669"/>
    <property type="project" value="InterPro"/>
</dbReference>
<dbReference type="InterPro" id="IPR010278">
    <property type="entry name" value="Varicellovirus_Gp2_glycop"/>
</dbReference>
<dbReference type="Pfam" id="PF05955">
    <property type="entry name" value="Herpes_gp2"/>
    <property type="match status" value="1"/>
</dbReference>
<organismHost>
    <name type="scientific">Equus caballus</name>
    <name type="common">Horse</name>
    <dbReference type="NCBI Taxonomy" id="9796"/>
</organismHost>
<sequence>RRGSPQGGSHTTPHPDRLTPSPDDTYDDDTNHPNGRNNSIEIVPQLPPDRPLIELGVATLRKNFMEASCTVETNSGLAIFWKIGKPSVDAFNRGTTHTRLMRNGVPVYALVSTLRVPWLNVIPLTKITCAACPTNLVAGDGEDLNSCTTKSTTIPCPGQQRTHIFFSAKGHRAVCITSELVSQPTITWSVGSDRLRNDGFSQTWYGIQPGVCGILRSRFAFTAPPGALDQHQRTISVRSAHRTQRRAITKCYPTPTQLPTSL</sequence>
<name>GP2_EHV1D</name>
<protein>
    <recommendedName>
        <fullName>Glycoprotein gp2</fullName>
    </recommendedName>
    <alternativeName>
        <fullName>Glycoprotein X</fullName>
        <shortName>GpX</shortName>
    </alternativeName>
</protein>
<reference key="1">
    <citation type="journal article" date="1990" name="J. Gen. Virol.">
        <title>Equine herpesvirus type 1 unique short fragment encodes glycoproteins with homology to herpes simplex virus type 1 gD, gI and gE.</title>
        <authorList>
            <person name="Audonnet J.-C."/>
            <person name="Winslow J."/>
            <person name="Allen G."/>
            <person name="Paoletti E."/>
        </authorList>
    </citation>
    <scope>NUCLEOTIDE SEQUENCE [GENOMIC DNA]</scope>
</reference>
<proteinExistence type="inferred from homology"/>
<organism>
    <name type="scientific">Equine herpesvirus 1 (strain Kentucky D)</name>
    <name type="common">EHV-1</name>
    <name type="synonym">Equine abortion virus</name>
    <dbReference type="NCBI Taxonomy" id="10330"/>
    <lineage>
        <taxon>Viruses</taxon>
        <taxon>Duplodnaviria</taxon>
        <taxon>Heunggongvirae</taxon>
        <taxon>Peploviricota</taxon>
        <taxon>Herviviricetes</taxon>
        <taxon>Herpesvirales</taxon>
        <taxon>Orthoherpesviridae</taxon>
        <taxon>Alphaherpesvirinae</taxon>
        <taxon>Varicellovirus</taxon>
        <taxon>Varicellovirus equidalpha1</taxon>
        <taxon>Equid alphaherpesvirus 1</taxon>
    </lineage>
</organism>
<comment type="function">
    <text evidence="1">Virulence factor.</text>
</comment>
<comment type="subcellular location">
    <subcellularLocation>
        <location evidence="3">Virion membrane</location>
        <topology evidence="3">Single-pass membrane protein</topology>
    </subcellularLocation>
</comment>
<accession>P25088</accession>
<evidence type="ECO:0000250" key="1"/>
<evidence type="ECO:0000256" key="2">
    <source>
        <dbReference type="SAM" id="MobiDB-lite"/>
    </source>
</evidence>
<evidence type="ECO:0000305" key="3"/>